<dbReference type="EC" id="1.11.1.-"/>
<dbReference type="EC" id="1.6.3.1"/>
<dbReference type="EMBL" id="AE014134">
    <property type="protein sequence ID" value="AAF51201.2"/>
    <property type="molecule type" value="Genomic_DNA"/>
</dbReference>
<dbReference type="EMBL" id="BT015247">
    <property type="protein sequence ID" value="AAT94476.1"/>
    <property type="status" value="ALT_SEQ"/>
    <property type="molecule type" value="mRNA"/>
</dbReference>
<dbReference type="RefSeq" id="NP_001259968.1">
    <property type="nucleotide sequence ID" value="NM_001273039.1"/>
</dbReference>
<dbReference type="RefSeq" id="NP_608715.2">
    <property type="nucleotide sequence ID" value="NM_134871.3"/>
</dbReference>
<dbReference type="SMR" id="Q9VQH2"/>
<dbReference type="BioGRID" id="59700">
    <property type="interactions" value="9"/>
</dbReference>
<dbReference type="FunCoup" id="Q9VQH2">
    <property type="interactions" value="171"/>
</dbReference>
<dbReference type="STRING" id="7227.FBpp0289611"/>
<dbReference type="GlyCosmos" id="Q9VQH2">
    <property type="glycosylation" value="4 sites, No reported glycans"/>
</dbReference>
<dbReference type="GlyGen" id="Q9VQH2">
    <property type="glycosylation" value="4 sites"/>
</dbReference>
<dbReference type="PaxDb" id="7227-FBpp0289611"/>
<dbReference type="EnsemblMetazoa" id="FBtr0300382">
    <property type="protein sequence ID" value="FBpp0289611"/>
    <property type="gene ID" value="FBgn0283531"/>
</dbReference>
<dbReference type="EnsemblMetazoa" id="FBtr0335133">
    <property type="protein sequence ID" value="FBpp0307132"/>
    <property type="gene ID" value="FBgn0283531"/>
</dbReference>
<dbReference type="GeneID" id="33477"/>
<dbReference type="KEGG" id="dme:Dmel_CG3131"/>
<dbReference type="AGR" id="FB:FBgn0283531"/>
<dbReference type="CTD" id="565097"/>
<dbReference type="FlyBase" id="FBgn0283531">
    <property type="gene designation" value="Duox"/>
</dbReference>
<dbReference type="VEuPathDB" id="VectorBase:FBgn0283531"/>
<dbReference type="eggNOG" id="KOG0039">
    <property type="taxonomic scope" value="Eukaryota"/>
</dbReference>
<dbReference type="GeneTree" id="ENSGT00940000163963"/>
<dbReference type="HOGENOM" id="CLU_004482_1_0_1"/>
<dbReference type="InParanoid" id="Q9VQH2"/>
<dbReference type="OMA" id="QRYDYFE"/>
<dbReference type="OrthoDB" id="6019201at2759"/>
<dbReference type="PhylomeDB" id="Q9VQH2"/>
<dbReference type="Reactome" id="R-DME-209968">
    <property type="pathway name" value="Thyroxine biosynthesis"/>
</dbReference>
<dbReference type="BioGRID-ORCS" id="33477">
    <property type="hits" value="0 hits in 3 CRISPR screens"/>
</dbReference>
<dbReference type="GenomeRNAi" id="33477"/>
<dbReference type="PRO" id="PR:Q9VQH2"/>
<dbReference type="Proteomes" id="UP000000803">
    <property type="component" value="Chromosome 2L"/>
</dbReference>
<dbReference type="Bgee" id="FBgn0283531">
    <property type="expression patterns" value="Expressed in capitellum (Drosophila) and 36 other cell types or tissues"/>
</dbReference>
<dbReference type="ExpressionAtlas" id="Q9VQH2">
    <property type="expression patterns" value="baseline and differential"/>
</dbReference>
<dbReference type="GO" id="GO:0012505">
    <property type="term" value="C:endomembrane system"/>
    <property type="evidence" value="ECO:0007005"/>
    <property type="project" value="FlyBase"/>
</dbReference>
<dbReference type="GO" id="GO:0043020">
    <property type="term" value="C:NADPH oxidase complex"/>
    <property type="evidence" value="ECO:0000318"/>
    <property type="project" value="GO_Central"/>
</dbReference>
<dbReference type="GO" id="GO:0005886">
    <property type="term" value="C:plasma membrane"/>
    <property type="evidence" value="ECO:0000318"/>
    <property type="project" value="GO_Central"/>
</dbReference>
<dbReference type="GO" id="GO:0005509">
    <property type="term" value="F:calcium ion binding"/>
    <property type="evidence" value="ECO:0007669"/>
    <property type="project" value="InterPro"/>
</dbReference>
<dbReference type="GO" id="GO:0020037">
    <property type="term" value="F:heme binding"/>
    <property type="evidence" value="ECO:0007669"/>
    <property type="project" value="InterPro"/>
</dbReference>
<dbReference type="GO" id="GO:0016174">
    <property type="term" value="F:NAD(P)H oxidase H2O2-forming activity"/>
    <property type="evidence" value="ECO:0000315"/>
    <property type="project" value="FlyBase"/>
</dbReference>
<dbReference type="GO" id="GO:0106293">
    <property type="term" value="F:NADH oxidase H202-forming activity"/>
    <property type="evidence" value="ECO:0007669"/>
    <property type="project" value="RHEA"/>
</dbReference>
<dbReference type="GO" id="GO:0106294">
    <property type="term" value="F:NADPH oxidase H202-forming activity"/>
    <property type="evidence" value="ECO:0007669"/>
    <property type="project" value="RHEA"/>
</dbReference>
<dbReference type="GO" id="GO:0004601">
    <property type="term" value="F:peroxidase activity"/>
    <property type="evidence" value="ECO:0000314"/>
    <property type="project" value="FlyBase"/>
</dbReference>
<dbReference type="GO" id="GO:0016175">
    <property type="term" value="F:superoxide-generating NAD(P)H oxidase activity"/>
    <property type="evidence" value="ECO:0000318"/>
    <property type="project" value="GO_Central"/>
</dbReference>
<dbReference type="GO" id="GO:0106292">
    <property type="term" value="F:superoxide-generating NADPH oxidase activity"/>
    <property type="evidence" value="ECO:0000315"/>
    <property type="project" value="FlyBase"/>
</dbReference>
<dbReference type="GO" id="GO:0008365">
    <property type="term" value="P:adult chitin-based cuticle development"/>
    <property type="evidence" value="ECO:0000315"/>
    <property type="project" value="FlyBase"/>
</dbReference>
<dbReference type="GO" id="GO:0048085">
    <property type="term" value="P:adult chitin-containing cuticle pigmentation"/>
    <property type="evidence" value="ECO:0000315"/>
    <property type="project" value="FlyBase"/>
</dbReference>
<dbReference type="GO" id="GO:0042335">
    <property type="term" value="P:cuticle development"/>
    <property type="evidence" value="ECO:0000250"/>
    <property type="project" value="UniProtKB"/>
</dbReference>
<dbReference type="GO" id="GO:0019221">
    <property type="term" value="P:cytokine-mediated signaling pathway"/>
    <property type="evidence" value="ECO:0000250"/>
    <property type="project" value="UniProtKB"/>
</dbReference>
<dbReference type="GO" id="GO:0006952">
    <property type="term" value="P:defense response"/>
    <property type="evidence" value="ECO:0000318"/>
    <property type="project" value="GO_Central"/>
</dbReference>
<dbReference type="GO" id="GO:0042742">
    <property type="term" value="P:defense response to bacterium"/>
    <property type="evidence" value="ECO:0000315"/>
    <property type="project" value="FlyBase"/>
</dbReference>
<dbReference type="GO" id="GO:0042744">
    <property type="term" value="P:hydrogen peroxide catabolic process"/>
    <property type="evidence" value="ECO:0007669"/>
    <property type="project" value="UniProtKB-KW"/>
</dbReference>
<dbReference type="GO" id="GO:0007476">
    <property type="term" value="P:imaginal disc-derived wing morphogenesis"/>
    <property type="evidence" value="ECO:0000315"/>
    <property type="project" value="FlyBase"/>
</dbReference>
<dbReference type="GO" id="GO:0002385">
    <property type="term" value="P:mucosal immune response"/>
    <property type="evidence" value="ECO:0000315"/>
    <property type="project" value="FlyBase"/>
</dbReference>
<dbReference type="GO" id="GO:0043066">
    <property type="term" value="P:negative regulation of apoptotic process"/>
    <property type="evidence" value="ECO:0000315"/>
    <property type="project" value="FlyBase"/>
</dbReference>
<dbReference type="GO" id="GO:0072593">
    <property type="term" value="P:reactive oxygen species metabolic process"/>
    <property type="evidence" value="ECO:0000315"/>
    <property type="project" value="FlyBase"/>
</dbReference>
<dbReference type="GO" id="GO:0051591">
    <property type="term" value="P:response to cAMP"/>
    <property type="evidence" value="ECO:0000250"/>
    <property type="project" value="UniProtKB"/>
</dbReference>
<dbReference type="GO" id="GO:0006979">
    <property type="term" value="P:response to oxidative stress"/>
    <property type="evidence" value="ECO:0007669"/>
    <property type="project" value="InterPro"/>
</dbReference>
<dbReference type="GO" id="GO:0009611">
    <property type="term" value="P:response to wounding"/>
    <property type="evidence" value="ECO:0000315"/>
    <property type="project" value="FlyBase"/>
</dbReference>
<dbReference type="GO" id="GO:0042554">
    <property type="term" value="P:superoxide anion generation"/>
    <property type="evidence" value="ECO:0000318"/>
    <property type="project" value="GO_Central"/>
</dbReference>
<dbReference type="GO" id="GO:0035220">
    <property type="term" value="P:wing disc development"/>
    <property type="evidence" value="ECO:0000315"/>
    <property type="project" value="FlyBase"/>
</dbReference>
<dbReference type="CDD" id="cd09820">
    <property type="entry name" value="dual_peroxidase_like"/>
    <property type="match status" value="1"/>
</dbReference>
<dbReference type="CDD" id="cd00051">
    <property type="entry name" value="EFh"/>
    <property type="match status" value="3"/>
</dbReference>
<dbReference type="CDD" id="cd06186">
    <property type="entry name" value="NOX_Duox_like_FAD_NADP"/>
    <property type="match status" value="1"/>
</dbReference>
<dbReference type="FunFam" id="1.10.238.10:FF:000208">
    <property type="entry name" value="Dual oxidase 1"/>
    <property type="match status" value="1"/>
</dbReference>
<dbReference type="FunFam" id="1.10.640.10:FF:000008">
    <property type="entry name" value="Dual oxidase 1"/>
    <property type="match status" value="1"/>
</dbReference>
<dbReference type="FunFam" id="3.40.50.80:FF:000020">
    <property type="entry name" value="Dual oxidase 1"/>
    <property type="match status" value="1"/>
</dbReference>
<dbReference type="FunFam" id="2.40.30.10:FF:000059">
    <property type="entry name" value="dual oxidase isoform X1"/>
    <property type="match status" value="1"/>
</dbReference>
<dbReference type="Gene3D" id="1.10.238.10">
    <property type="entry name" value="EF-hand"/>
    <property type="match status" value="1"/>
</dbReference>
<dbReference type="Gene3D" id="1.10.640.10">
    <property type="entry name" value="Haem peroxidase domain superfamily, animal type"/>
    <property type="match status" value="1"/>
</dbReference>
<dbReference type="Gene3D" id="3.40.50.80">
    <property type="entry name" value="Nucleotide-binding domain of ferredoxin-NADP reductase (FNR) module"/>
    <property type="match status" value="1"/>
</dbReference>
<dbReference type="Gene3D" id="2.40.30.10">
    <property type="entry name" value="Translation factors"/>
    <property type="match status" value="1"/>
</dbReference>
<dbReference type="InterPro" id="IPR034821">
    <property type="entry name" value="DUOX_peroxidase"/>
</dbReference>
<dbReference type="InterPro" id="IPR011992">
    <property type="entry name" value="EF-hand-dom_pair"/>
</dbReference>
<dbReference type="InterPro" id="IPR018247">
    <property type="entry name" value="EF_Hand_1_Ca_BS"/>
</dbReference>
<dbReference type="InterPro" id="IPR002048">
    <property type="entry name" value="EF_hand_dom"/>
</dbReference>
<dbReference type="InterPro" id="IPR013112">
    <property type="entry name" value="FAD-bd_8"/>
</dbReference>
<dbReference type="InterPro" id="IPR017927">
    <property type="entry name" value="FAD-bd_FR_type"/>
</dbReference>
<dbReference type="InterPro" id="IPR013130">
    <property type="entry name" value="Fe3_Rdtase_TM_dom"/>
</dbReference>
<dbReference type="InterPro" id="IPR013121">
    <property type="entry name" value="Fe_red_NAD-bd_6"/>
</dbReference>
<dbReference type="InterPro" id="IPR039261">
    <property type="entry name" value="FNR_nucleotide-bd"/>
</dbReference>
<dbReference type="InterPro" id="IPR019791">
    <property type="entry name" value="Haem_peroxidase_animal"/>
</dbReference>
<dbReference type="InterPro" id="IPR010255">
    <property type="entry name" value="Haem_peroxidase_sf"/>
</dbReference>
<dbReference type="InterPro" id="IPR037120">
    <property type="entry name" value="Haem_peroxidase_sf_animal"/>
</dbReference>
<dbReference type="InterPro" id="IPR017938">
    <property type="entry name" value="Riboflavin_synthase-like_b-brl"/>
</dbReference>
<dbReference type="PANTHER" id="PTHR11475:SF144">
    <property type="entry name" value="NAD(P)H OXIDASE (H2O2-FORMING)"/>
    <property type="match status" value="1"/>
</dbReference>
<dbReference type="PANTHER" id="PTHR11475">
    <property type="entry name" value="OXIDASE/PEROXIDASE"/>
    <property type="match status" value="1"/>
</dbReference>
<dbReference type="Pfam" id="PF03098">
    <property type="entry name" value="An_peroxidase"/>
    <property type="match status" value="1"/>
</dbReference>
<dbReference type="Pfam" id="PF00036">
    <property type="entry name" value="EF-hand_1"/>
    <property type="match status" value="1"/>
</dbReference>
<dbReference type="Pfam" id="PF13499">
    <property type="entry name" value="EF-hand_7"/>
    <property type="match status" value="1"/>
</dbReference>
<dbReference type="Pfam" id="PF08022">
    <property type="entry name" value="FAD_binding_8"/>
    <property type="match status" value="1"/>
</dbReference>
<dbReference type="Pfam" id="PF01794">
    <property type="entry name" value="Ferric_reduct"/>
    <property type="match status" value="1"/>
</dbReference>
<dbReference type="Pfam" id="PF08030">
    <property type="entry name" value="NAD_binding_6"/>
    <property type="match status" value="1"/>
</dbReference>
<dbReference type="PRINTS" id="PR00457">
    <property type="entry name" value="ANPEROXIDASE"/>
</dbReference>
<dbReference type="SFLD" id="SFLDG01169">
    <property type="entry name" value="NADPH_oxidase_subgroup_(NOX)"/>
    <property type="match status" value="1"/>
</dbReference>
<dbReference type="SMART" id="SM00054">
    <property type="entry name" value="EFh"/>
    <property type="match status" value="3"/>
</dbReference>
<dbReference type="SUPFAM" id="SSF47473">
    <property type="entry name" value="EF-hand"/>
    <property type="match status" value="1"/>
</dbReference>
<dbReference type="SUPFAM" id="SSF52343">
    <property type="entry name" value="Ferredoxin reductase-like, C-terminal NADP-linked domain"/>
    <property type="match status" value="1"/>
</dbReference>
<dbReference type="SUPFAM" id="SSF48113">
    <property type="entry name" value="Heme-dependent peroxidases"/>
    <property type="match status" value="1"/>
</dbReference>
<dbReference type="SUPFAM" id="SSF63380">
    <property type="entry name" value="Riboflavin synthase domain-like"/>
    <property type="match status" value="1"/>
</dbReference>
<dbReference type="PROSITE" id="PS00018">
    <property type="entry name" value="EF_HAND_1"/>
    <property type="match status" value="2"/>
</dbReference>
<dbReference type="PROSITE" id="PS50222">
    <property type="entry name" value="EF_HAND_2"/>
    <property type="match status" value="3"/>
</dbReference>
<dbReference type="PROSITE" id="PS51384">
    <property type="entry name" value="FAD_FR"/>
    <property type="match status" value="1"/>
</dbReference>
<dbReference type="PROSITE" id="PS50292">
    <property type="entry name" value="PEROXIDASE_3"/>
    <property type="match status" value="1"/>
</dbReference>
<evidence type="ECO:0000250" key="1"/>
<evidence type="ECO:0000255" key="2"/>
<evidence type="ECO:0000255" key="3">
    <source>
        <dbReference type="PROSITE-ProRule" id="PRU00448"/>
    </source>
</evidence>
<evidence type="ECO:0000255" key="4">
    <source>
        <dbReference type="PROSITE-ProRule" id="PRU00716"/>
    </source>
</evidence>
<evidence type="ECO:0000256" key="5">
    <source>
        <dbReference type="SAM" id="MobiDB-lite"/>
    </source>
</evidence>
<evidence type="ECO:0000269" key="6">
    <source>
    </source>
</evidence>
<evidence type="ECO:0000269" key="7">
    <source>
    </source>
</evidence>
<evidence type="ECO:0000305" key="8"/>
<feature type="chain" id="PRO_0000223352" description="Dual oxidase">
    <location>
        <begin position="1"/>
        <end position="1537"/>
    </location>
</feature>
<feature type="topological domain" description="Extracellular" evidence="2">
    <location>
        <begin position="1"/>
        <end position="626"/>
    </location>
</feature>
<feature type="transmembrane region" description="Helical" evidence="2">
    <location>
        <begin position="627"/>
        <end position="647"/>
    </location>
</feature>
<feature type="topological domain" description="Cytoplasmic" evidence="2">
    <location>
        <begin position="648"/>
        <end position="1029"/>
    </location>
</feature>
<feature type="transmembrane region" description="Helical" evidence="2">
    <location>
        <begin position="1030"/>
        <end position="1050"/>
    </location>
</feature>
<feature type="topological domain" description="Extracellular" evidence="2">
    <location>
        <begin position="1051"/>
        <end position="1065"/>
    </location>
</feature>
<feature type="transmembrane region" description="Helical" evidence="2">
    <location>
        <begin position="1066"/>
        <end position="1086"/>
    </location>
</feature>
<feature type="topological domain" description="Cytoplasmic" evidence="2">
    <location>
        <begin position="1087"/>
        <end position="1116"/>
    </location>
</feature>
<feature type="transmembrane region" description="Helical" evidence="2">
    <location>
        <begin position="1117"/>
        <end position="1137"/>
    </location>
</feature>
<feature type="topological domain" description="Extracellular" evidence="2">
    <location>
        <begin position="1138"/>
        <end position="1171"/>
    </location>
</feature>
<feature type="transmembrane region" description="Helical" evidence="2">
    <location>
        <begin position="1172"/>
        <end position="1192"/>
    </location>
</feature>
<feature type="topological domain" description="Cytoplasmic" evidence="2">
    <location>
        <begin position="1193"/>
        <end position="1202"/>
    </location>
</feature>
<feature type="transmembrane region" description="Helical" evidence="2">
    <location>
        <begin position="1203"/>
        <end position="1223"/>
    </location>
</feature>
<feature type="topological domain" description="Extracellular" evidence="2">
    <location>
        <begin position="1224"/>
        <end position="1230"/>
    </location>
</feature>
<feature type="transmembrane region" description="Helical" evidence="2">
    <location>
        <begin position="1231"/>
        <end position="1251"/>
    </location>
</feature>
<feature type="topological domain" description="Cytoplasmic" evidence="2">
    <location>
        <begin position="1252"/>
        <end position="1537"/>
    </location>
</feature>
<feature type="domain" description="EF-hand 1" evidence="3">
    <location>
        <begin position="855"/>
        <end position="890"/>
    </location>
</feature>
<feature type="domain" description="EF-hand 2" evidence="3">
    <location>
        <begin position="891"/>
        <end position="926"/>
    </location>
</feature>
<feature type="domain" description="EF-hand 3" evidence="3">
    <location>
        <begin position="936"/>
        <end position="971"/>
    </location>
</feature>
<feature type="domain" description="Ferric oxidoreductase">
    <location>
        <begin position="1078"/>
        <end position="1218"/>
    </location>
</feature>
<feature type="domain" description="FAD-binding FR-type" evidence="4">
    <location>
        <begin position="1253"/>
        <end position="1358"/>
    </location>
</feature>
<feature type="region of interest" description="Disordered" evidence="5">
    <location>
        <begin position="1"/>
        <end position="29"/>
    </location>
</feature>
<feature type="region of interest" description="Peroxidase-like; mediates peroxidase activity" evidence="1">
    <location>
        <begin position="63"/>
        <end position="628"/>
    </location>
</feature>
<feature type="binding site" evidence="3">
    <location>
        <position position="868"/>
    </location>
    <ligand>
        <name>Ca(2+)</name>
        <dbReference type="ChEBI" id="CHEBI:29108"/>
        <label>1</label>
    </ligand>
</feature>
<feature type="binding site" evidence="3">
    <location>
        <position position="870"/>
    </location>
    <ligand>
        <name>Ca(2+)</name>
        <dbReference type="ChEBI" id="CHEBI:29108"/>
        <label>1</label>
    </ligand>
</feature>
<feature type="binding site" evidence="3">
    <location>
        <position position="872"/>
    </location>
    <ligand>
        <name>Ca(2+)</name>
        <dbReference type="ChEBI" id="CHEBI:29108"/>
        <label>1</label>
    </ligand>
</feature>
<feature type="binding site" evidence="3">
    <location>
        <position position="874"/>
    </location>
    <ligand>
        <name>Ca(2+)</name>
        <dbReference type="ChEBI" id="CHEBI:29108"/>
        <label>1</label>
    </ligand>
</feature>
<feature type="binding site" evidence="3">
    <location>
        <position position="879"/>
    </location>
    <ligand>
        <name>Ca(2+)</name>
        <dbReference type="ChEBI" id="CHEBI:29108"/>
        <label>1</label>
    </ligand>
</feature>
<feature type="binding site" evidence="3">
    <location>
        <position position="904"/>
    </location>
    <ligand>
        <name>Ca(2+)</name>
        <dbReference type="ChEBI" id="CHEBI:29108"/>
        <label>2</label>
    </ligand>
</feature>
<feature type="binding site" evidence="3">
    <location>
        <position position="906"/>
    </location>
    <ligand>
        <name>Ca(2+)</name>
        <dbReference type="ChEBI" id="CHEBI:29108"/>
        <label>2</label>
    </ligand>
</feature>
<feature type="binding site" evidence="3">
    <location>
        <position position="908"/>
    </location>
    <ligand>
        <name>Ca(2+)</name>
        <dbReference type="ChEBI" id="CHEBI:29108"/>
        <label>2</label>
    </ligand>
</feature>
<feature type="binding site" evidence="3">
    <location>
        <position position="915"/>
    </location>
    <ligand>
        <name>Ca(2+)</name>
        <dbReference type="ChEBI" id="CHEBI:29108"/>
        <label>2</label>
    </ligand>
</feature>
<feature type="modified residue" description="Phosphoserine" evidence="1">
    <location>
        <position position="826"/>
    </location>
</feature>
<feature type="modified residue" description="Phosphotyrosine" evidence="1">
    <location>
        <position position="1105"/>
    </location>
</feature>
<feature type="glycosylation site" description="N-linked (GlcNAc...) asparagine" evidence="2">
    <location>
        <position position="133"/>
    </location>
</feature>
<feature type="glycosylation site" description="N-linked (GlcNAc...) asparagine" evidence="2">
    <location>
        <position position="233"/>
    </location>
</feature>
<feature type="glycosylation site" description="N-linked (GlcNAc...) asparagine" evidence="2">
    <location>
        <position position="577"/>
    </location>
</feature>
<feature type="glycosylation site" description="N-linked (GlcNAc...) asparagine" evidence="2">
    <location>
        <position position="606"/>
    </location>
</feature>
<reference key="1">
    <citation type="journal article" date="2000" name="Science">
        <title>The genome sequence of Drosophila melanogaster.</title>
        <authorList>
            <person name="Adams M.D."/>
            <person name="Celniker S.E."/>
            <person name="Holt R.A."/>
            <person name="Evans C.A."/>
            <person name="Gocayne J.D."/>
            <person name="Amanatides P.G."/>
            <person name="Scherer S.E."/>
            <person name="Li P.W."/>
            <person name="Hoskins R.A."/>
            <person name="Galle R.F."/>
            <person name="George R.A."/>
            <person name="Lewis S.E."/>
            <person name="Richards S."/>
            <person name="Ashburner M."/>
            <person name="Henderson S.N."/>
            <person name="Sutton G.G."/>
            <person name="Wortman J.R."/>
            <person name="Yandell M.D."/>
            <person name="Zhang Q."/>
            <person name="Chen L.X."/>
            <person name="Brandon R.C."/>
            <person name="Rogers Y.-H.C."/>
            <person name="Blazej R.G."/>
            <person name="Champe M."/>
            <person name="Pfeiffer B.D."/>
            <person name="Wan K.H."/>
            <person name="Doyle C."/>
            <person name="Baxter E.G."/>
            <person name="Helt G."/>
            <person name="Nelson C.R."/>
            <person name="Miklos G.L.G."/>
            <person name="Abril J.F."/>
            <person name="Agbayani A."/>
            <person name="An H.-J."/>
            <person name="Andrews-Pfannkoch C."/>
            <person name="Baldwin D."/>
            <person name="Ballew R.M."/>
            <person name="Basu A."/>
            <person name="Baxendale J."/>
            <person name="Bayraktaroglu L."/>
            <person name="Beasley E.M."/>
            <person name="Beeson K.Y."/>
            <person name="Benos P.V."/>
            <person name="Berman B.P."/>
            <person name="Bhandari D."/>
            <person name="Bolshakov S."/>
            <person name="Borkova D."/>
            <person name="Botchan M.R."/>
            <person name="Bouck J."/>
            <person name="Brokstein P."/>
            <person name="Brottier P."/>
            <person name="Burtis K.C."/>
            <person name="Busam D.A."/>
            <person name="Butler H."/>
            <person name="Cadieu E."/>
            <person name="Center A."/>
            <person name="Chandra I."/>
            <person name="Cherry J.M."/>
            <person name="Cawley S."/>
            <person name="Dahlke C."/>
            <person name="Davenport L.B."/>
            <person name="Davies P."/>
            <person name="de Pablos B."/>
            <person name="Delcher A."/>
            <person name="Deng Z."/>
            <person name="Mays A.D."/>
            <person name="Dew I."/>
            <person name="Dietz S.M."/>
            <person name="Dodson K."/>
            <person name="Doup L.E."/>
            <person name="Downes M."/>
            <person name="Dugan-Rocha S."/>
            <person name="Dunkov B.C."/>
            <person name="Dunn P."/>
            <person name="Durbin K.J."/>
            <person name="Evangelista C.C."/>
            <person name="Ferraz C."/>
            <person name="Ferriera S."/>
            <person name="Fleischmann W."/>
            <person name="Fosler C."/>
            <person name="Gabrielian A.E."/>
            <person name="Garg N.S."/>
            <person name="Gelbart W.M."/>
            <person name="Glasser K."/>
            <person name="Glodek A."/>
            <person name="Gong F."/>
            <person name="Gorrell J.H."/>
            <person name="Gu Z."/>
            <person name="Guan P."/>
            <person name="Harris M."/>
            <person name="Harris N.L."/>
            <person name="Harvey D.A."/>
            <person name="Heiman T.J."/>
            <person name="Hernandez J.R."/>
            <person name="Houck J."/>
            <person name="Hostin D."/>
            <person name="Houston K.A."/>
            <person name="Howland T.J."/>
            <person name="Wei M.-H."/>
            <person name="Ibegwam C."/>
            <person name="Jalali M."/>
            <person name="Kalush F."/>
            <person name="Karpen G.H."/>
            <person name="Ke Z."/>
            <person name="Kennison J.A."/>
            <person name="Ketchum K.A."/>
            <person name="Kimmel B.E."/>
            <person name="Kodira C.D."/>
            <person name="Kraft C.L."/>
            <person name="Kravitz S."/>
            <person name="Kulp D."/>
            <person name="Lai Z."/>
            <person name="Lasko P."/>
            <person name="Lei Y."/>
            <person name="Levitsky A.A."/>
            <person name="Li J.H."/>
            <person name="Li Z."/>
            <person name="Liang Y."/>
            <person name="Lin X."/>
            <person name="Liu X."/>
            <person name="Mattei B."/>
            <person name="McIntosh T.C."/>
            <person name="McLeod M.P."/>
            <person name="McPherson D."/>
            <person name="Merkulov G."/>
            <person name="Milshina N.V."/>
            <person name="Mobarry C."/>
            <person name="Morris J."/>
            <person name="Moshrefi A."/>
            <person name="Mount S.M."/>
            <person name="Moy M."/>
            <person name="Murphy B."/>
            <person name="Murphy L."/>
            <person name="Muzny D.M."/>
            <person name="Nelson D.L."/>
            <person name="Nelson D.R."/>
            <person name="Nelson K.A."/>
            <person name="Nixon K."/>
            <person name="Nusskern D.R."/>
            <person name="Pacleb J.M."/>
            <person name="Palazzolo M."/>
            <person name="Pittman G.S."/>
            <person name="Pan S."/>
            <person name="Pollard J."/>
            <person name="Puri V."/>
            <person name="Reese M.G."/>
            <person name="Reinert K."/>
            <person name="Remington K."/>
            <person name="Saunders R.D.C."/>
            <person name="Scheeler F."/>
            <person name="Shen H."/>
            <person name="Shue B.C."/>
            <person name="Siden-Kiamos I."/>
            <person name="Simpson M."/>
            <person name="Skupski M.P."/>
            <person name="Smith T.J."/>
            <person name="Spier E."/>
            <person name="Spradling A.C."/>
            <person name="Stapleton M."/>
            <person name="Strong R."/>
            <person name="Sun E."/>
            <person name="Svirskas R."/>
            <person name="Tector C."/>
            <person name="Turner R."/>
            <person name="Venter E."/>
            <person name="Wang A.H."/>
            <person name="Wang X."/>
            <person name="Wang Z.-Y."/>
            <person name="Wassarman D.A."/>
            <person name="Weinstock G.M."/>
            <person name="Weissenbach J."/>
            <person name="Williams S.M."/>
            <person name="Woodage T."/>
            <person name="Worley K.C."/>
            <person name="Wu D."/>
            <person name="Yang S."/>
            <person name="Yao Q.A."/>
            <person name="Ye J."/>
            <person name="Yeh R.-F."/>
            <person name="Zaveri J.S."/>
            <person name="Zhan M."/>
            <person name="Zhang G."/>
            <person name="Zhao Q."/>
            <person name="Zheng L."/>
            <person name="Zheng X.H."/>
            <person name="Zhong F.N."/>
            <person name="Zhong W."/>
            <person name="Zhou X."/>
            <person name="Zhu S.C."/>
            <person name="Zhu X."/>
            <person name="Smith H.O."/>
            <person name="Gibbs R.A."/>
            <person name="Myers E.W."/>
            <person name="Rubin G.M."/>
            <person name="Venter J.C."/>
        </authorList>
    </citation>
    <scope>NUCLEOTIDE SEQUENCE [LARGE SCALE GENOMIC DNA]</scope>
    <source>
        <strain>Berkeley</strain>
    </source>
</reference>
<reference key="2">
    <citation type="journal article" date="2002" name="Genome Biol.">
        <title>Annotation of the Drosophila melanogaster euchromatic genome: a systematic review.</title>
        <authorList>
            <person name="Misra S."/>
            <person name="Crosby M.A."/>
            <person name="Mungall C.J."/>
            <person name="Matthews B.B."/>
            <person name="Campbell K.S."/>
            <person name="Hradecky P."/>
            <person name="Huang Y."/>
            <person name="Kaminker J.S."/>
            <person name="Millburn G.H."/>
            <person name="Prochnik S.E."/>
            <person name="Smith C.D."/>
            <person name="Tupy J.L."/>
            <person name="Whitfield E.J."/>
            <person name="Bayraktaroglu L."/>
            <person name="Berman B.P."/>
            <person name="Bettencourt B.R."/>
            <person name="Celniker S.E."/>
            <person name="de Grey A.D.N.J."/>
            <person name="Drysdale R.A."/>
            <person name="Harris N.L."/>
            <person name="Richter J."/>
            <person name="Russo S."/>
            <person name="Schroeder A.J."/>
            <person name="Shu S.Q."/>
            <person name="Stapleton M."/>
            <person name="Yamada C."/>
            <person name="Ashburner M."/>
            <person name="Gelbart W.M."/>
            <person name="Rubin G.M."/>
            <person name="Lewis S.E."/>
        </authorList>
    </citation>
    <scope>GENOME REANNOTATION</scope>
    <source>
        <strain>Berkeley</strain>
    </source>
</reference>
<reference key="3">
    <citation type="submission" date="2004-08" db="EMBL/GenBank/DDBJ databases">
        <authorList>
            <person name="Stapleton M."/>
            <person name="Carlson J.W."/>
            <person name="Chavez C."/>
            <person name="Frise E."/>
            <person name="George R.A."/>
            <person name="Pacleb J.M."/>
            <person name="Park S."/>
            <person name="Wan K.H."/>
            <person name="Yu C."/>
            <person name="Rubin G.M."/>
            <person name="Celniker S.E."/>
        </authorList>
    </citation>
    <scope>NUCLEOTIDE SEQUENCE [LARGE SCALE MRNA]</scope>
    <source>
        <strain>Berkeley</strain>
        <tissue>Larva</tissue>
        <tissue>Pupae</tissue>
    </source>
</reference>
<reference key="4">
    <citation type="journal article" date="2005" name="Science">
        <title>A direct role for dual oxidase in Drosophila gut immunity.</title>
        <authorList>
            <person name="Ha E.-M."/>
            <person name="Oh C.-T."/>
            <person name="Bae Y.S."/>
            <person name="Lee W.-J."/>
        </authorList>
    </citation>
    <scope>FUNCTION</scope>
    <scope>CATALYTIC ACTIVITY</scope>
    <scope>ACTIVITY REGULATION</scope>
</reference>
<reference key="5">
    <citation type="journal article" date="2007" name="Mol. Biosyst.">
        <title>An integrated chemical, mass spectrometric and computational strategy for (quantitative) phosphoproteomics: application to Drosophila melanogaster Kc167 cells.</title>
        <authorList>
            <person name="Bodenmiller B."/>
            <person name="Mueller L.N."/>
            <person name="Pedrioli P.G.A."/>
            <person name="Pflieger D."/>
            <person name="Juenger M.A."/>
            <person name="Eng J.K."/>
            <person name="Aebersold R."/>
            <person name="Tao W.A."/>
        </authorList>
    </citation>
    <scope>PHOSPHORYLATION [LARGE SCALE ANALYSIS] AT TYR-1105</scope>
    <scope>IDENTIFICATION BY MASS SPECTROMETRY</scope>
</reference>
<reference key="6">
    <citation type="journal article" date="2008" name="J. Proteome Res.">
        <title>Phosphoproteome analysis of Drosophila melanogaster embryos.</title>
        <authorList>
            <person name="Zhai B."/>
            <person name="Villen J."/>
            <person name="Beausoleil S.A."/>
            <person name="Mintseris J."/>
            <person name="Gygi S.P."/>
        </authorList>
    </citation>
    <scope>PHOSPHORYLATION [LARGE SCALE ANALYSIS] AT SER-826</scope>
    <scope>IDENTIFICATION BY MASS SPECTROMETRY</scope>
    <source>
        <tissue>Embryo</tissue>
    </source>
</reference>
<reference key="7">
    <citation type="journal article" date="2015" name="Cell Host Microbe">
        <title>Bacterial uracil modulates Drosophila DUOX-dependent gut immunity via Hedgehog-induced signaling endosomes.</title>
        <authorList>
            <person name="Lee K.A."/>
            <person name="Kim B."/>
            <person name="Bhin J."/>
            <person name="Kim D.H."/>
            <person name="You H."/>
            <person name="Kim E.K."/>
            <person name="Kim S.H."/>
            <person name="Ryu J.H."/>
            <person name="Hwang D."/>
            <person name="Lee W.J."/>
        </authorList>
    </citation>
    <scope>FUNCTION</scope>
    <scope>DISRUPTION PHENOTYPE</scope>
</reference>
<name>DUOX_DROME</name>
<keyword id="KW-0106">Calcium</keyword>
<keyword id="KW-0274">FAD</keyword>
<keyword id="KW-0285">Flavoprotein</keyword>
<keyword id="KW-0325">Glycoprotein</keyword>
<keyword id="KW-0376">Hydrogen peroxide</keyword>
<keyword id="KW-0472">Membrane</keyword>
<keyword id="KW-0479">Metal-binding</keyword>
<keyword id="KW-0521">NADP</keyword>
<keyword id="KW-0560">Oxidoreductase</keyword>
<keyword id="KW-0575">Peroxidase</keyword>
<keyword id="KW-0597">Phosphoprotein</keyword>
<keyword id="KW-1185">Reference proteome</keyword>
<keyword id="KW-0677">Repeat</keyword>
<keyword id="KW-0812">Transmembrane</keyword>
<keyword id="KW-1133">Transmembrane helix</keyword>
<gene>
    <name type="primary">Duox</name>
    <name type="ORF">CG3131</name>
</gene>
<organism>
    <name type="scientific">Drosophila melanogaster</name>
    <name type="common">Fruit fly</name>
    <dbReference type="NCBI Taxonomy" id="7227"/>
    <lineage>
        <taxon>Eukaryota</taxon>
        <taxon>Metazoa</taxon>
        <taxon>Ecdysozoa</taxon>
        <taxon>Arthropoda</taxon>
        <taxon>Hexapoda</taxon>
        <taxon>Insecta</taxon>
        <taxon>Pterygota</taxon>
        <taxon>Neoptera</taxon>
        <taxon>Endopterygota</taxon>
        <taxon>Diptera</taxon>
        <taxon>Brachycera</taxon>
        <taxon>Muscomorpha</taxon>
        <taxon>Ephydroidea</taxon>
        <taxon>Drosophilidae</taxon>
        <taxon>Drosophila</taxon>
        <taxon>Sophophora</taxon>
    </lineage>
</organism>
<accession>Q9VQH2</accession>
<accession>Q6AWK1</accession>
<sequence>MSVPSAPHQRAESKNRVPRPGQKNRKLPKLRLHWPGATYGGALLLLLISYGLELGSVHCYEKMYSQTEKQRYDGWYNNLAHPDWGSVDSHLVRKAPPSYSDGVYAMAGANRPSTRRLSRLFMRGKDGLGSKFNRTALLAFFGQLVANEIVMASESGCPIEMHRIEIEKCDEMYDRECRGDKYIPFHRAAYDRDTGQSPNAPREQINQMTAWIDGSFIYSTSEAWLNAMRSFHNGTLLTEKDGKLPVRNTMRVPLFNNPVPSVMKMLSPERLFLLGDPRTNQNPAILSFAILFLRWHNTLAQRIKRVHPDWSDEDIYQRARHTVIASLQNVIVYEYLPAFLGTSLPPYEGYKQDIHPGIGHIFQAAAFRFGHTMIPPGIYRRDGQCNFKETPMGYPAVRLCSTWWDSSGFFADTSVEEVLMGLASQISEREDPVLCSDVRDKLFGPMEFTRRDLGALNIMRGRDNGLPDYNTARESYGLKRHKTWTDINPPLFETQPELLDMLKEAYDNKLDDVDVYVGGMLESYGQPGEFFTAVIKEQFQRLRDADRFWFENERNGIFTPEEIAELRKITLWDIIVNSTDVKEEEIQKDVFMWRTGDPCPQPMQLNATELEPCTYLEGYDYFSGSELMFIYVCVFLGFVPILCAGAGYCVVKLQNSKRRRLKIRQEALRAPQHKGSVDKMLAREWLHANHKRLVTVKFGPEAAIYTVDRKGEKLRTFSLKHIDVVSVEESATNHIKKKPYILLRVPSDHDLVLELESYGARRKFVKKLEDFLLLHKKEMTLMEVNRDIMLARAETRERRQKRLEYFFREAYALTFGLRPGERRRRSDASSDGEVMTVMRTSLSKAEFAAALGMKPNDMFVRKMFNIVDKDQDGRISFQEFLETVVLFSRGKTDDKLRIIFDMCDNDRNGVIDKGELSEMMRSLVEIARTTSLGDDQVTELIDGMFQDVGLEHKNHLTYQDFKLMMKEYKGDFVAIGLDCKGAKQNFLDTSTNVARMTSFNIEPMQDKPRHWLLAKWDAYITFLEENRQNIFYLFLFYVVTIVLFVERFIHYSFMAEHTDLRHIMGVGIAITRGSAASLSFCYSLLLLTMSRNLITKLKEFPIQQYIPLDSHIQFHKIAACTALFFSVLHTVGHIVNFYHVSTQSHENLRCLTREVHFASDYKPDITFWLFQTVTGTTGVMLFIIMCIIFVFAHPTIRKKAYNFFWNMHTLYIGLYLLSLIHGLARLTGPPRFWMFFLGPGIVYTLDKIVSLRTKYMALDVIDTDLLPSDVIKIKFYRPPNLKYLSGQWVRLSCTAFRPHEMHSFTLTSAPHENFLSCHIKAQGPWTWKLRNYFDPCNYNPEDQPKIRIEGPFGGGNQDWYKFEVAVMVGGGIGVTPYASILNDLVFGTSTNRYSGVACKKVYFLWICPSHKHFEWFIDVLRDVEKKDVTNVLEIHIFITQFFHKFDLRTTMLYICENHFQRLSKTSIFTGLKAVNHFGRPDMSSFLKFVQKKHSYVSKIGVFSCGPRPLTKSVMSACDEVNKTRKLPYFIHHFENFG</sequence>
<protein>
    <recommendedName>
        <fullName>Dual oxidase</fullName>
        <ecNumber>1.11.1.-</ecNumber>
        <ecNumber>1.6.3.1</ecNumber>
    </recommendedName>
</protein>
<proteinExistence type="evidence at protein level"/>
<comment type="function">
    <text evidence="6 7">Plays a role in innate immunity limiting microbial proliferation in the gut (PubMed:16272120, PubMed:25639794). Acts downstream of a hh-signaling pathway to induce the production of reactive oxygen species (ROS) in response to intestinal bacterial infection (PubMed:25639794). May generate antimicrobial oxidative burst through its peroxidase-like domain (PubMed:16272120).</text>
</comment>
<comment type="catalytic activity">
    <reaction evidence="6">
        <text>NADH + O2 + H(+) = H2O2 + NAD(+)</text>
        <dbReference type="Rhea" id="RHEA:11264"/>
        <dbReference type="ChEBI" id="CHEBI:15378"/>
        <dbReference type="ChEBI" id="CHEBI:15379"/>
        <dbReference type="ChEBI" id="CHEBI:16240"/>
        <dbReference type="ChEBI" id="CHEBI:57540"/>
        <dbReference type="ChEBI" id="CHEBI:57945"/>
        <dbReference type="EC" id="1.6.3.1"/>
    </reaction>
</comment>
<comment type="catalytic activity">
    <reaction evidence="6">
        <text>NADPH + O2 + H(+) = H2O2 + NADP(+)</text>
        <dbReference type="Rhea" id="RHEA:11260"/>
        <dbReference type="ChEBI" id="CHEBI:15378"/>
        <dbReference type="ChEBI" id="CHEBI:15379"/>
        <dbReference type="ChEBI" id="CHEBI:16240"/>
        <dbReference type="ChEBI" id="CHEBI:57783"/>
        <dbReference type="ChEBI" id="CHEBI:58349"/>
        <dbReference type="EC" id="1.6.3.1"/>
    </reaction>
</comment>
<comment type="activity regulation">
    <text evidence="6">Peroxidase activity is inhibited by aminotriazole and azide.</text>
</comment>
<comment type="subcellular location">
    <subcellularLocation>
        <location evidence="8">Membrane</location>
        <topology evidence="8">Multi-pass membrane protein</topology>
    </subcellularLocation>
</comment>
<comment type="disruption phenotype">
    <text evidence="7">RNAi-mediated knockdown severely reduces adult survival following the ingestion of E.carotovora.</text>
</comment>
<comment type="similarity">
    <text evidence="8">In the N-terminal section; belongs to the peroxidase family.</text>
</comment>
<comment type="sequence caution" evidence="8">
    <conflict type="erroneous termination">
        <sequence resource="EMBL-CDS" id="AAT94476"/>
    </conflict>
    <text>Truncated C-terminus.</text>
</comment>
<comment type="sequence caution" evidence="8">
    <conflict type="frameshift">
        <sequence resource="EMBL-CDS" id="AAT94476"/>
    </conflict>
</comment>